<protein>
    <recommendedName>
        <fullName evidence="4">Intraflagellar transport protein 38</fullName>
        <shortName evidence="4">IFT38</shortName>
    </recommendedName>
    <alternativeName>
        <fullName evidence="8">Clusterin associated protein 1</fullName>
    </alternativeName>
    <alternativeName>
        <fullName evidence="7">Clusterin associated protein 1, putative</fullName>
    </alternativeName>
</protein>
<comment type="function">
    <text evidence="6">Component of the intraflagellar transport complex B (IFT-B) involved in flagellar assembly (Probable).</text>
</comment>
<comment type="subcellular location">
    <subcellularLocation>
        <location evidence="3">Cell projection</location>
        <location evidence="3">Cilium</location>
        <location evidence="3">Flagellum</location>
    </subcellularLocation>
    <subcellularLocation>
        <location evidence="3">Cytoplasm</location>
        <location evidence="3">Cytoskeleton</location>
        <location evidence="3">Flagellum axoneme</location>
    </subcellularLocation>
    <subcellularLocation>
        <location evidence="3">Cytoplasm</location>
        <location evidence="3">Cytoskeleton</location>
        <location evidence="3">Flagellum basal body</location>
    </subcellularLocation>
    <text evidence="3">Localizes to the cytoplasmic and membrane-bound portions of each of the eight axonemes, localizing particularly at the flagellar pores and at the distal flagellar tips. Localizes to the basal bodies.</text>
</comment>
<comment type="similarity">
    <text evidence="5">Belongs to the CLUAP1 family.</text>
</comment>
<proteinExistence type="inferred from homology"/>
<dbReference type="EMBL" id="AACB02000017">
    <property type="protein sequence ID" value="EDO79323.1"/>
    <property type="molecule type" value="Genomic_DNA"/>
</dbReference>
<dbReference type="EMBL" id="AACB03000004">
    <property type="protein sequence ID" value="KAE8301971.1"/>
    <property type="molecule type" value="Genomic_DNA"/>
</dbReference>
<dbReference type="RefSeq" id="XP_001706997.1">
    <property type="nucleotide sequence ID" value="XM_001706945.1"/>
</dbReference>
<dbReference type="SMR" id="A8BGV3"/>
<dbReference type="STRING" id="184922.A8BGV3"/>
<dbReference type="EnsemblProtists" id="EDO79323">
    <property type="protein sequence ID" value="EDO79323"/>
    <property type="gene ID" value="GL50803_16707"/>
</dbReference>
<dbReference type="GeneID" id="5699900"/>
<dbReference type="KEGG" id="gla:GL50803_0016707"/>
<dbReference type="VEuPathDB" id="GiardiaDB:GL50803_16707"/>
<dbReference type="HOGENOM" id="CLU_034981_1_0_1"/>
<dbReference type="OMA" id="RKVYGNM"/>
<dbReference type="Proteomes" id="UP000001548">
    <property type="component" value="Chromosome 2"/>
</dbReference>
<dbReference type="GO" id="GO:0097729">
    <property type="term" value="C:9+2 motile cilium"/>
    <property type="evidence" value="ECO:0000314"/>
    <property type="project" value="UniProtKB"/>
</dbReference>
<dbReference type="GO" id="GO:0005930">
    <property type="term" value="C:axoneme"/>
    <property type="evidence" value="ECO:0000314"/>
    <property type="project" value="UniProtKB"/>
</dbReference>
<dbReference type="GO" id="GO:0036064">
    <property type="term" value="C:ciliary basal body"/>
    <property type="evidence" value="ECO:0000314"/>
    <property type="project" value="UniProtKB"/>
</dbReference>
<dbReference type="GO" id="GO:1990900">
    <property type="term" value="C:ciliary pocket collar"/>
    <property type="evidence" value="ECO:0000314"/>
    <property type="project" value="UniProtKB"/>
</dbReference>
<dbReference type="GO" id="GO:0097542">
    <property type="term" value="C:ciliary tip"/>
    <property type="evidence" value="ECO:0000314"/>
    <property type="project" value="UniProtKB"/>
</dbReference>
<dbReference type="GO" id="GO:0005929">
    <property type="term" value="C:cilium"/>
    <property type="evidence" value="ECO:0000318"/>
    <property type="project" value="GO_Central"/>
</dbReference>
<dbReference type="GO" id="GO:0030992">
    <property type="term" value="C:intraciliary transport particle B"/>
    <property type="evidence" value="ECO:0000318"/>
    <property type="project" value="GO_Central"/>
</dbReference>
<dbReference type="GO" id="GO:0005815">
    <property type="term" value="C:microtubule organizing center"/>
    <property type="evidence" value="ECO:0000318"/>
    <property type="project" value="GO_Central"/>
</dbReference>
<dbReference type="GO" id="GO:0060271">
    <property type="term" value="P:cilium assembly"/>
    <property type="evidence" value="ECO:0000318"/>
    <property type="project" value="GO_Central"/>
</dbReference>
<dbReference type="GO" id="GO:0035720">
    <property type="term" value="P:intraciliary anterograde transport"/>
    <property type="evidence" value="ECO:0000305"/>
    <property type="project" value="UniProtKB"/>
</dbReference>
<dbReference type="GO" id="GO:0035735">
    <property type="term" value="P:intraciliary transport involved in cilium assembly"/>
    <property type="evidence" value="ECO:0000305"/>
    <property type="project" value="UniProtKB"/>
</dbReference>
<dbReference type="InterPro" id="IPR019366">
    <property type="entry name" value="Clusterin-associated_protein-1"/>
</dbReference>
<dbReference type="PANTHER" id="PTHR21547">
    <property type="entry name" value="CLUSTERIN ASSOCIATED PROTEIN 1"/>
    <property type="match status" value="1"/>
</dbReference>
<dbReference type="PANTHER" id="PTHR21547:SF0">
    <property type="entry name" value="CLUSTERIN-ASSOCIATED PROTEIN 1"/>
    <property type="match status" value="1"/>
</dbReference>
<dbReference type="Pfam" id="PF10234">
    <property type="entry name" value="Cluap1"/>
    <property type="match status" value="1"/>
</dbReference>
<feature type="chain" id="PRO_0000459355" description="Intraflagellar transport protein 38">
    <location>
        <begin position="1"/>
        <end position="431"/>
    </location>
</feature>
<feature type="region of interest" description="Disordered" evidence="2">
    <location>
        <begin position="346"/>
        <end position="431"/>
    </location>
</feature>
<feature type="coiled-coil region" evidence="1">
    <location>
        <begin position="177"/>
        <end position="218"/>
    </location>
</feature>
<feature type="compositionally biased region" description="Acidic residues" evidence="2">
    <location>
        <begin position="352"/>
        <end position="370"/>
    </location>
</feature>
<feature type="compositionally biased region" description="Basic and acidic residues" evidence="2">
    <location>
        <begin position="384"/>
        <end position="405"/>
    </location>
</feature>
<feature type="compositionally biased region" description="Acidic residues" evidence="2">
    <location>
        <begin position="420"/>
        <end position="431"/>
    </location>
</feature>
<evidence type="ECO:0000255" key="1"/>
<evidence type="ECO:0000256" key="2">
    <source>
        <dbReference type="SAM" id="MobiDB-lite"/>
    </source>
</evidence>
<evidence type="ECO:0000269" key="3">
    <source>
    </source>
</evidence>
<evidence type="ECO:0000303" key="4">
    <source>
    </source>
</evidence>
<evidence type="ECO:0000305" key="5"/>
<evidence type="ECO:0000305" key="6">
    <source>
    </source>
</evidence>
<evidence type="ECO:0000312" key="7">
    <source>
        <dbReference type="EMBL" id="EDO79323.1"/>
    </source>
</evidence>
<evidence type="ECO:0000312" key="8">
    <source>
        <dbReference type="EMBL" id="KAE8301971.1"/>
    </source>
</evidence>
<evidence type="ECO:0000312" key="9">
    <source>
        <dbReference type="Proteomes" id="UP000001548"/>
    </source>
</evidence>
<organism evidence="7">
    <name type="scientific">Giardia intestinalis (strain ATCC 50803 / WB clone C6)</name>
    <name type="common">Giardia lamblia</name>
    <dbReference type="NCBI Taxonomy" id="184922"/>
    <lineage>
        <taxon>Eukaryota</taxon>
        <taxon>Metamonada</taxon>
        <taxon>Diplomonadida</taxon>
        <taxon>Hexamitidae</taxon>
        <taxon>Giardiinae</taxon>
        <taxon>Giardia</taxon>
    </lineage>
</organism>
<sequence length="431" mass="48629">MSYHELQHFTLLMTQIGFPRPISIDTFRKPDFFLVAEILHYITTVVAPSNAIAMDIATQEDRVYFITTVVNVLQTTLHLKLDSKKIYAAGPEAVRELRKIVQEVATYIGAAATSTDKGTSSAASVDLTLHSNALCVASSKIVEASTKLLTQLRLHVDDLYQRMQQAMSSQPDAASLSAAVQQRIKNLAAECNTLQEEVTTNKREKAKLEEQITQKKQSITHTMDRLDAIRSTKPPFLAELEALEADLSKLHLEYARKFRSLLFLEGQLRANDVREQQRVIEREKNLRALQENALKEELNNMYGGVDARSSTSHLDDEFVETPMPHVMDMHQPKPVQDFVPSKAAPINTNAEIPDDESYSYSYEEEEEEEQVISSANPMQQARAPETHSNGEKHRGLDELSHKSNENADNEEYSYEYSDIGGEELDPDNIEF</sequence>
<reference evidence="7 9" key="1">
    <citation type="journal article" date="2007" name="Science">
        <title>Genomic minimalism in the early diverging intestinal parasite Giardia lamblia.</title>
        <authorList>
            <person name="Morrison H.G."/>
            <person name="McArthur A.G."/>
            <person name="Gillin F.D."/>
            <person name="Aley S.B."/>
            <person name="Adam R.D."/>
            <person name="Olsen G.J."/>
            <person name="Best A.A."/>
            <person name="Cande W.Z."/>
            <person name="Chen F."/>
            <person name="Cipriano M.J."/>
            <person name="Davids B.J."/>
            <person name="Dawson S.C."/>
            <person name="Elmendorf H.G."/>
            <person name="Hehl A.B."/>
            <person name="Holder M.E."/>
            <person name="Huse S.M."/>
            <person name="Kim U.U."/>
            <person name="Lasek-Nesselquist E."/>
            <person name="Manning G."/>
            <person name="Nigam A."/>
            <person name="Nixon J.E.J."/>
            <person name="Palm D."/>
            <person name="Passamaneck N.E."/>
            <person name="Prabhu A."/>
            <person name="Reich C.I."/>
            <person name="Reiner D.S."/>
            <person name="Samuelson J."/>
            <person name="Svard S.G."/>
            <person name="Sogin M.L."/>
        </authorList>
    </citation>
    <scope>NUCLEOTIDE SEQUENCE [LARGE SCALE GENOMIC DNA]</scope>
    <source>
        <strain evidence="9">ATCC 50803 / WB clone C6</strain>
    </source>
</reference>
<reference evidence="8" key="2">
    <citation type="submission" date="2019-07" db="EMBL/GenBank/DDBJ databases">
        <title>New Giardia intestinalis WB genome in near-complete chromosomes.</title>
        <authorList>
            <person name="Xu F."/>
            <person name="Jex A."/>
            <person name="Svard S.G."/>
        </authorList>
    </citation>
    <scope>NUCLEOTIDE SEQUENCE [LARGE SCALE GENOMIC DNA]</scope>
    <source>
        <strain evidence="8">ATCC 50803 / WB clone C6</strain>
    </source>
</reference>
<reference key="3">
    <citation type="journal article" date="2019" name="Elife">
        <title>Length-dependent disassembly maintains four different flagellar lengths in Giardia.</title>
        <authorList>
            <person name="McInally S.G."/>
            <person name="Kondev J."/>
            <person name="Dawson S.C."/>
        </authorList>
    </citation>
    <scope>FUNCTION</scope>
    <scope>SUBCELLULAR LOCATION</scope>
    <source>
        <strain evidence="4">ATCC 50803 / WB clone C6</strain>
    </source>
</reference>
<name>IFT38_GIAIC</name>
<keyword id="KW-0966">Cell projection</keyword>
<keyword id="KW-0969">Cilium</keyword>
<keyword id="KW-0970">Cilium biogenesis/degradation</keyword>
<keyword id="KW-0175">Coiled coil</keyword>
<keyword id="KW-0963">Cytoplasm</keyword>
<keyword id="KW-0206">Cytoskeleton</keyword>
<keyword id="KW-0282">Flagellum</keyword>
<keyword id="KW-1185">Reference proteome</keyword>
<gene>
    <name evidence="8" type="ORF">GL50803_0016707</name>
    <name evidence="7" type="ORF">GL50803_16707</name>
</gene>
<accession>A8BGV3</accession>